<evidence type="ECO:0000250" key="1">
    <source>
        <dbReference type="UniProtKB" id="P48449"/>
    </source>
</evidence>
<evidence type="ECO:0000255" key="2"/>
<evidence type="ECO:0000269" key="3">
    <source>
    </source>
</evidence>
<evidence type="ECO:0000303" key="4">
    <source>
    </source>
</evidence>
<evidence type="ECO:0000305" key="5"/>
<organism>
    <name type="scientific">Ailanthus altissima</name>
    <name type="common">Tree-of-heaven</name>
    <name type="synonym">Toxicodendron altissimum</name>
    <dbReference type="NCBI Taxonomy" id="2768810"/>
    <lineage>
        <taxon>Eukaryota</taxon>
        <taxon>Viridiplantae</taxon>
        <taxon>Streptophyta</taxon>
        <taxon>Embryophyta</taxon>
        <taxon>Tracheophyta</taxon>
        <taxon>Spermatophyta</taxon>
        <taxon>Magnoliopsida</taxon>
        <taxon>eudicotyledons</taxon>
        <taxon>Gunneridae</taxon>
        <taxon>Pentapetalae</taxon>
        <taxon>rosids</taxon>
        <taxon>malvids</taxon>
        <taxon>Sapindales</taxon>
        <taxon>Simaroubaceae</taxon>
        <taxon>Ailanthus</taxon>
    </lineage>
</organism>
<gene>
    <name evidence="4" type="primary">OSC2</name>
    <name evidence="4" type="synonym">TS</name>
</gene>
<comment type="function">
    <text evidence="3">Oxidosqualene cyclase involved in the biosynthesis of quassinoids triterpene natural products such as ailanthone, chaparrinone, glaucarubinone and amarolide, allelopathic degraded triterpene lactones inhibiting the growth of other plants, and possessing antimalarial, antifeedant, insecticidal, anti-inflammatory and anticancer activities (PubMed:36082289). Converts 2,3-oxidosqualene (2,3-epoxysqualene) into tirucalladienol, generating rings and asymmetric centers in a single transformation (PubMed:36082289).</text>
</comment>
<comment type="catalytic activity">
    <reaction evidence="3">
        <text>(S)-2,3-epoxysqualene = tirucalla-7,24-dien-3beta-ol</text>
        <dbReference type="Rhea" id="RHEA:31887"/>
        <dbReference type="ChEBI" id="CHEBI:15441"/>
        <dbReference type="ChEBI" id="CHEBI:63468"/>
        <dbReference type="EC" id="5.4.99.56"/>
    </reaction>
    <physiologicalReaction direction="left-to-right" evidence="3">
        <dbReference type="Rhea" id="RHEA:31888"/>
    </physiologicalReaction>
</comment>
<comment type="pathway">
    <text evidence="3">Secondary metabolite biosynthesis; terpenoid biosynthesis.</text>
</comment>
<comment type="tissue specificity">
    <text evidence="3">Mainly expressed in roots, bark, wood, stems and petioles and, to a lower extent, in older leaves.</text>
</comment>
<comment type="similarity">
    <text evidence="5">Belongs to the terpene cyclase/mutase family.</text>
</comment>
<proteinExistence type="evidence at protein level"/>
<sequence>MWRLKIAEGDKNSPYIFTTNNFVGRQIWEFDPNYAASPEELAEVEEARQKFHKNRHKVKPASDLMWRLQFLREKNFKQTIPPVKVKDEEEITYETATKAVKRAASYFSAIQANDGHWPAENAGPMYFLPPFVFCLYITGHLDAVFTAEHKKEILRYLYNHQHEDGGWGIHIEGHSSMFGTVYGYITMRLLGLGPNDGENNACARARKWIRDNGGVTYIPSWGKNWLSILGLFEWAGTHPMPPEFWLLPSYFPLHPAQMWCYCRLVYMPLSYLYGKRFVGPITPLIQQLRNELHTQPYKEINWRKVRHLCAKPDLYYPHTVVQNILWDGMYLATEPLLTRWPLNKYLRQKALKETMKIIHYEDQSSRYITIGSVEKPLCMLACWVEDPDGVAFKKHLARVSDYFWLGEDGMKAQTFGSQTWDTALGLQALLACDLVDEIAPTLAKGHDYLKKAQVRDNPIGDYTSNFRHFSKGAWTFSDQDHGWQVSDCTAESLKCCLNFSMMSPEIVGEKIEPERLYDAVNFILSLQDKTTGGLAVWEKAGASLLLEWLNPVEFLEDLIVEHTYVECTASAIEAFVLFRKLYPHHRKKEIDNFIVKAVQYIEHEQTADGSWYGNWGICFLYGSCFALGGLAAAGKTYHNCEAIRRGVDFLLKAQSDDGGWGESYQSCPNKIYTPLDGKRSTVVHTALAVLGLIHAGQAERDATPIHRGVKFLINSHLENGDFPQQEIMGVFMRNCMLHYAEYRNIFPLWALAEYRRKVPLPN</sequence>
<keyword id="KW-0413">Isomerase</keyword>
<keyword id="KW-0677">Repeat</keyword>
<accession>P0DXI2</accession>
<protein>
    <recommendedName>
        <fullName evidence="4">Tirucalla-7,24-dien-3beta-ol synthase OSC2</fullName>
        <shortName evidence="4">AaTS</shortName>
        <ecNumber evidence="3">5.4.99.56</ecNumber>
    </recommendedName>
    <alternativeName>
        <fullName evidence="4">Oxidosqualene cyclase 2</fullName>
        <shortName evidence="4">AaOSC2</shortName>
    </alternativeName>
</protein>
<dbReference type="EC" id="5.4.99.56" evidence="3"/>
<dbReference type="EMBL" id="ON595696">
    <property type="protein sequence ID" value="UTU07506.1"/>
    <property type="molecule type" value="mRNA"/>
</dbReference>
<dbReference type="SMR" id="P0DXI2"/>
<dbReference type="UniPathway" id="UPA00213"/>
<dbReference type="GO" id="GO:0005811">
    <property type="term" value="C:lipid droplet"/>
    <property type="evidence" value="ECO:0007669"/>
    <property type="project" value="InterPro"/>
</dbReference>
<dbReference type="GO" id="GO:0042300">
    <property type="term" value="F:beta-amyrin synthase activity"/>
    <property type="evidence" value="ECO:0007669"/>
    <property type="project" value="UniProtKB-ARBA"/>
</dbReference>
<dbReference type="GO" id="GO:0016104">
    <property type="term" value="P:triterpenoid biosynthetic process"/>
    <property type="evidence" value="ECO:0007669"/>
    <property type="project" value="InterPro"/>
</dbReference>
<dbReference type="CDD" id="cd02892">
    <property type="entry name" value="SQCY_1"/>
    <property type="match status" value="1"/>
</dbReference>
<dbReference type="FunFam" id="1.50.10.20:FF:000044">
    <property type="entry name" value="Lupeol synthase"/>
    <property type="match status" value="1"/>
</dbReference>
<dbReference type="FunFam" id="1.50.10.20:FF:000011">
    <property type="entry name" value="Terpene cyclase/mutase family member"/>
    <property type="match status" value="1"/>
</dbReference>
<dbReference type="Gene3D" id="1.50.10.20">
    <property type="match status" value="2"/>
</dbReference>
<dbReference type="InterPro" id="IPR032696">
    <property type="entry name" value="SQ_cyclase_C"/>
</dbReference>
<dbReference type="InterPro" id="IPR032697">
    <property type="entry name" value="SQ_cyclase_N"/>
</dbReference>
<dbReference type="InterPro" id="IPR018333">
    <property type="entry name" value="Squalene_cyclase"/>
</dbReference>
<dbReference type="InterPro" id="IPR002365">
    <property type="entry name" value="Terpene_synthase_CS"/>
</dbReference>
<dbReference type="InterPro" id="IPR008930">
    <property type="entry name" value="Terpenoid_cyclase/PrenylTrfase"/>
</dbReference>
<dbReference type="NCBIfam" id="TIGR01787">
    <property type="entry name" value="squalene_cyclas"/>
    <property type="match status" value="1"/>
</dbReference>
<dbReference type="PANTHER" id="PTHR11764:SF58">
    <property type="entry name" value="BETA-AMYRIN SYNTHASE-RELATED"/>
    <property type="match status" value="1"/>
</dbReference>
<dbReference type="PANTHER" id="PTHR11764">
    <property type="entry name" value="TERPENE CYCLASE/MUTASE FAMILY MEMBER"/>
    <property type="match status" value="1"/>
</dbReference>
<dbReference type="Pfam" id="PF13243">
    <property type="entry name" value="SQHop_cyclase_C"/>
    <property type="match status" value="1"/>
</dbReference>
<dbReference type="Pfam" id="PF13249">
    <property type="entry name" value="SQHop_cyclase_N"/>
    <property type="match status" value="1"/>
</dbReference>
<dbReference type="SFLD" id="SFLDG01016">
    <property type="entry name" value="Prenyltransferase_Like_2"/>
    <property type="match status" value="1"/>
</dbReference>
<dbReference type="SUPFAM" id="SSF48239">
    <property type="entry name" value="Terpenoid cyclases/Protein prenyltransferases"/>
    <property type="match status" value="2"/>
</dbReference>
<dbReference type="PROSITE" id="PS01074">
    <property type="entry name" value="TERPENE_SYNTHASES"/>
    <property type="match status" value="1"/>
</dbReference>
<reference key="1">
    <citation type="journal article" date="2022" name="Front. Plant Sci.">
        <title>Identification of early quassinoid biosynthesis in the invasive tree of heaven (Ailanthus altissima) confirms evolutionary origin from protolimonoids.</title>
        <authorList>
            <person name="Chuang L."/>
            <person name="Liu S."/>
            <person name="Biedermann D."/>
            <person name="Franke J."/>
        </authorList>
    </citation>
    <scope>NUCLEOTIDE SEQUENCE [MRNA]</scope>
    <scope>FUNCTION</scope>
    <scope>CATALYTIC ACTIVITY</scope>
    <scope>PATHWAY</scope>
    <scope>TISSUE SPECIFICITY</scope>
</reference>
<name>OSC2_AILAL</name>
<feature type="chain" id="PRO_0000461333" description="Tirucalla-7,24-dien-3beta-ol synthase OSC2">
    <location>
        <begin position="1"/>
        <end position="762"/>
    </location>
</feature>
<feature type="repeat" description="PFTB 1" evidence="2">
    <location>
        <begin position="100"/>
        <end position="142"/>
    </location>
</feature>
<feature type="repeat" description="PFTB 2" evidence="2">
    <location>
        <begin position="150"/>
        <end position="191"/>
    </location>
</feature>
<feature type="repeat" description="PFTB 3" evidence="2">
    <location>
        <begin position="442"/>
        <end position="486"/>
    </location>
</feature>
<feature type="repeat" description="PFTB 4" evidence="2">
    <location>
        <begin position="516"/>
        <end position="562"/>
    </location>
</feature>
<feature type="repeat" description="PFTB 5" evidence="2">
    <location>
        <begin position="594"/>
        <end position="634"/>
    </location>
</feature>
<feature type="repeat" description="PFTB 6" evidence="2">
    <location>
        <begin position="643"/>
        <end position="684"/>
    </location>
</feature>
<feature type="repeat" description="PFTB 7" evidence="2">
    <location>
        <begin position="705"/>
        <end position="746"/>
    </location>
</feature>
<feature type="active site" description="Proton donor" evidence="1">
    <location>
        <position position="487"/>
    </location>
</feature>